<comment type="function">
    <text evidence="1">Essential cell division protein. May link together the upstream cell division proteins, which are predominantly cytoplasmic, with the downstream cell division proteins, which are predominantly periplasmic.</text>
</comment>
<comment type="subunit">
    <text evidence="1">Part of a complex composed of FtsB, FtsL and FtsQ.</text>
</comment>
<comment type="subcellular location">
    <subcellularLocation>
        <location evidence="1">Cell inner membrane</location>
        <topology evidence="1">Single-pass type II membrane protein</topology>
    </subcellularLocation>
    <text evidence="1">Localizes to the division septum.</text>
</comment>
<comment type="similarity">
    <text evidence="1">Belongs to the FtsB family.</text>
</comment>
<name>FTSB_IDILO</name>
<dbReference type="EMBL" id="AE017340">
    <property type="protein sequence ID" value="AAV81594.1"/>
    <property type="molecule type" value="Genomic_DNA"/>
</dbReference>
<dbReference type="RefSeq" id="WP_011234005.1">
    <property type="nucleotide sequence ID" value="NC_006512.1"/>
</dbReference>
<dbReference type="SMR" id="Q5QUC2"/>
<dbReference type="STRING" id="283942.IL0753"/>
<dbReference type="GeneID" id="41335907"/>
<dbReference type="KEGG" id="ilo:IL0753"/>
<dbReference type="eggNOG" id="COG2919">
    <property type="taxonomic scope" value="Bacteria"/>
</dbReference>
<dbReference type="HOGENOM" id="CLU_134863_5_2_6"/>
<dbReference type="OrthoDB" id="7061211at2"/>
<dbReference type="Proteomes" id="UP000001171">
    <property type="component" value="Chromosome"/>
</dbReference>
<dbReference type="GO" id="GO:0032153">
    <property type="term" value="C:cell division site"/>
    <property type="evidence" value="ECO:0007669"/>
    <property type="project" value="UniProtKB-UniRule"/>
</dbReference>
<dbReference type="GO" id="GO:0030428">
    <property type="term" value="C:cell septum"/>
    <property type="evidence" value="ECO:0007669"/>
    <property type="project" value="TreeGrafter"/>
</dbReference>
<dbReference type="GO" id="GO:0005886">
    <property type="term" value="C:plasma membrane"/>
    <property type="evidence" value="ECO:0007669"/>
    <property type="project" value="UniProtKB-SubCell"/>
</dbReference>
<dbReference type="GO" id="GO:0043093">
    <property type="term" value="P:FtsZ-dependent cytokinesis"/>
    <property type="evidence" value="ECO:0007669"/>
    <property type="project" value="UniProtKB-UniRule"/>
</dbReference>
<dbReference type="HAMAP" id="MF_00599">
    <property type="entry name" value="FtsB"/>
    <property type="match status" value="1"/>
</dbReference>
<dbReference type="InterPro" id="IPR023081">
    <property type="entry name" value="Cell_div_FtsB"/>
</dbReference>
<dbReference type="InterPro" id="IPR007060">
    <property type="entry name" value="FtsL/DivIC"/>
</dbReference>
<dbReference type="NCBIfam" id="NF002058">
    <property type="entry name" value="PRK00888.1"/>
    <property type="match status" value="1"/>
</dbReference>
<dbReference type="PANTHER" id="PTHR37485">
    <property type="entry name" value="CELL DIVISION PROTEIN FTSB"/>
    <property type="match status" value="1"/>
</dbReference>
<dbReference type="PANTHER" id="PTHR37485:SF1">
    <property type="entry name" value="CELL DIVISION PROTEIN FTSB"/>
    <property type="match status" value="1"/>
</dbReference>
<dbReference type="Pfam" id="PF04977">
    <property type="entry name" value="DivIC"/>
    <property type="match status" value="1"/>
</dbReference>
<protein>
    <recommendedName>
        <fullName evidence="1">Cell division protein FtsB</fullName>
    </recommendedName>
</protein>
<gene>
    <name evidence="1" type="primary">ftsB</name>
    <name type="ordered locus">IL0753</name>
</gene>
<proteinExistence type="inferred from homology"/>
<organism>
    <name type="scientific">Idiomarina loihiensis (strain ATCC BAA-735 / DSM 15497 / L2-TR)</name>
    <dbReference type="NCBI Taxonomy" id="283942"/>
    <lineage>
        <taxon>Bacteria</taxon>
        <taxon>Pseudomonadati</taxon>
        <taxon>Pseudomonadota</taxon>
        <taxon>Gammaproteobacteria</taxon>
        <taxon>Alteromonadales</taxon>
        <taxon>Idiomarinaceae</taxon>
        <taxon>Idiomarina</taxon>
    </lineage>
</organism>
<evidence type="ECO:0000255" key="1">
    <source>
        <dbReference type="HAMAP-Rule" id="MF_00599"/>
    </source>
</evidence>
<reference key="1">
    <citation type="journal article" date="2004" name="Proc. Natl. Acad. Sci. U.S.A.">
        <title>Genome sequence of the deep-sea gamma-proteobacterium Idiomarina loihiensis reveals amino acid fermentation as a source of carbon and energy.</title>
        <authorList>
            <person name="Hou S."/>
            <person name="Saw J.H."/>
            <person name="Lee K.S."/>
            <person name="Freitas T.A."/>
            <person name="Belisle C."/>
            <person name="Kawarabayasi Y."/>
            <person name="Donachie S.P."/>
            <person name="Pikina A."/>
            <person name="Galperin M.Y."/>
            <person name="Koonin E.V."/>
            <person name="Makarova K.S."/>
            <person name="Omelchenko M.V."/>
            <person name="Sorokin A."/>
            <person name="Wolf Y.I."/>
            <person name="Li Q.X."/>
            <person name="Keum Y.S."/>
            <person name="Campbell S."/>
            <person name="Denery J."/>
            <person name="Aizawa S."/>
            <person name="Shibata S."/>
            <person name="Malahoff A."/>
            <person name="Alam M."/>
        </authorList>
    </citation>
    <scope>NUCLEOTIDE SEQUENCE [LARGE SCALE GENOMIC DNA]</scope>
    <source>
        <strain>ATCC BAA-735 / DSM 15497 / L2-TR</strain>
    </source>
</reference>
<feature type="chain" id="PRO_0000214446" description="Cell division protein FtsB">
    <location>
        <begin position="1"/>
        <end position="93"/>
    </location>
</feature>
<feature type="topological domain" description="Cytoplasmic" evidence="1">
    <location>
        <begin position="1"/>
        <end position="3"/>
    </location>
</feature>
<feature type="transmembrane region" description="Helical" evidence="1">
    <location>
        <begin position="4"/>
        <end position="21"/>
    </location>
</feature>
<feature type="topological domain" description="Periplasmic" evidence="1">
    <location>
        <begin position="22"/>
        <end position="93"/>
    </location>
</feature>
<feature type="coiled-coil region" evidence="1">
    <location>
        <begin position="28"/>
        <end position="75"/>
    </location>
</feature>
<keyword id="KW-0131">Cell cycle</keyword>
<keyword id="KW-0132">Cell division</keyword>
<keyword id="KW-0997">Cell inner membrane</keyword>
<keyword id="KW-1003">Cell membrane</keyword>
<keyword id="KW-0175">Coiled coil</keyword>
<keyword id="KW-0472">Membrane</keyword>
<keyword id="KW-1185">Reference proteome</keyword>
<keyword id="KW-0812">Transmembrane</keyword>
<keyword id="KW-1133">Transmembrane helix</keyword>
<accession>Q5QUC2</accession>
<sequence length="93" mass="11153">MRVTLVVLLALFLALQYRLWFGKNSLPDYWRLQQEVSNQKNTNENLERRNQLIYADIEDLREGEDALEERARNELGMVKKDEVFFRLVPDRNP</sequence>